<organism>
    <name type="scientific">Shewanella baltica (strain OS155 / ATCC BAA-1091)</name>
    <dbReference type="NCBI Taxonomy" id="325240"/>
    <lineage>
        <taxon>Bacteria</taxon>
        <taxon>Pseudomonadati</taxon>
        <taxon>Pseudomonadota</taxon>
        <taxon>Gammaproteobacteria</taxon>
        <taxon>Alteromonadales</taxon>
        <taxon>Shewanellaceae</taxon>
        <taxon>Shewanella</taxon>
    </lineage>
</organism>
<feature type="chain" id="PRO_1000013438" description="Large ribosomal subunit protein bL34">
    <location>
        <begin position="1"/>
        <end position="45"/>
    </location>
</feature>
<feature type="region of interest" description="Disordered" evidence="2">
    <location>
        <begin position="1"/>
        <end position="21"/>
    </location>
</feature>
<feature type="compositionally biased region" description="Polar residues" evidence="2">
    <location>
        <begin position="1"/>
        <end position="10"/>
    </location>
</feature>
<feature type="compositionally biased region" description="Basic residues" evidence="2">
    <location>
        <begin position="11"/>
        <end position="20"/>
    </location>
</feature>
<proteinExistence type="inferred from homology"/>
<protein>
    <recommendedName>
        <fullName evidence="1">Large ribosomal subunit protein bL34</fullName>
    </recommendedName>
    <alternativeName>
        <fullName evidence="3">50S ribosomal protein L34</fullName>
    </alternativeName>
</protein>
<sequence>MSKRTFQPSNLKRKRSHGFRARMATVGGRKVLARRRAKGRARLSA</sequence>
<evidence type="ECO:0000255" key="1">
    <source>
        <dbReference type="HAMAP-Rule" id="MF_00391"/>
    </source>
</evidence>
<evidence type="ECO:0000256" key="2">
    <source>
        <dbReference type="SAM" id="MobiDB-lite"/>
    </source>
</evidence>
<evidence type="ECO:0000305" key="3"/>
<dbReference type="EMBL" id="CP000563">
    <property type="protein sequence ID" value="ABN63844.1"/>
    <property type="molecule type" value="Genomic_DNA"/>
</dbReference>
<dbReference type="RefSeq" id="WP_006083827.1">
    <property type="nucleotide sequence ID" value="NC_009052.1"/>
</dbReference>
<dbReference type="SMR" id="A3DAT1"/>
<dbReference type="STRING" id="325240.Sbal_4383"/>
<dbReference type="GeneID" id="90572020"/>
<dbReference type="KEGG" id="sbl:Sbal_4383"/>
<dbReference type="HOGENOM" id="CLU_129938_2_0_6"/>
<dbReference type="Proteomes" id="UP000001557">
    <property type="component" value="Chromosome"/>
</dbReference>
<dbReference type="GO" id="GO:1990904">
    <property type="term" value="C:ribonucleoprotein complex"/>
    <property type="evidence" value="ECO:0007669"/>
    <property type="project" value="UniProtKB-KW"/>
</dbReference>
<dbReference type="GO" id="GO:0005840">
    <property type="term" value="C:ribosome"/>
    <property type="evidence" value="ECO:0007669"/>
    <property type="project" value="UniProtKB-KW"/>
</dbReference>
<dbReference type="GO" id="GO:0003735">
    <property type="term" value="F:structural constituent of ribosome"/>
    <property type="evidence" value="ECO:0007669"/>
    <property type="project" value="InterPro"/>
</dbReference>
<dbReference type="GO" id="GO:0006412">
    <property type="term" value="P:translation"/>
    <property type="evidence" value="ECO:0007669"/>
    <property type="project" value="UniProtKB-UniRule"/>
</dbReference>
<dbReference type="FunFam" id="1.10.287.3980:FF:000001">
    <property type="entry name" value="Mitochondrial ribosomal protein L34"/>
    <property type="match status" value="1"/>
</dbReference>
<dbReference type="Gene3D" id="1.10.287.3980">
    <property type="match status" value="1"/>
</dbReference>
<dbReference type="HAMAP" id="MF_00391">
    <property type="entry name" value="Ribosomal_bL34"/>
    <property type="match status" value="1"/>
</dbReference>
<dbReference type="InterPro" id="IPR000271">
    <property type="entry name" value="Ribosomal_bL34"/>
</dbReference>
<dbReference type="InterPro" id="IPR020939">
    <property type="entry name" value="Ribosomal_bL34_CS"/>
</dbReference>
<dbReference type="NCBIfam" id="TIGR01030">
    <property type="entry name" value="rpmH_bact"/>
    <property type="match status" value="1"/>
</dbReference>
<dbReference type="PANTHER" id="PTHR14503:SF4">
    <property type="entry name" value="LARGE RIBOSOMAL SUBUNIT PROTEIN BL34M"/>
    <property type="match status" value="1"/>
</dbReference>
<dbReference type="PANTHER" id="PTHR14503">
    <property type="entry name" value="MITOCHONDRIAL RIBOSOMAL PROTEIN 34 FAMILY MEMBER"/>
    <property type="match status" value="1"/>
</dbReference>
<dbReference type="Pfam" id="PF00468">
    <property type="entry name" value="Ribosomal_L34"/>
    <property type="match status" value="1"/>
</dbReference>
<dbReference type="PROSITE" id="PS00784">
    <property type="entry name" value="RIBOSOMAL_L34"/>
    <property type="match status" value="1"/>
</dbReference>
<gene>
    <name evidence="1" type="primary">rpmH</name>
    <name type="ordered locus">Sbal_4383</name>
</gene>
<keyword id="KW-1185">Reference proteome</keyword>
<keyword id="KW-0687">Ribonucleoprotein</keyword>
<keyword id="KW-0689">Ribosomal protein</keyword>
<reference key="1">
    <citation type="submission" date="2007-02" db="EMBL/GenBank/DDBJ databases">
        <title>Complete sequence of chromosome of Shewanella baltica OS155.</title>
        <authorList>
            <consortium name="US DOE Joint Genome Institute"/>
            <person name="Copeland A."/>
            <person name="Lucas S."/>
            <person name="Lapidus A."/>
            <person name="Barry K."/>
            <person name="Detter J.C."/>
            <person name="Glavina del Rio T."/>
            <person name="Hammon N."/>
            <person name="Israni S."/>
            <person name="Dalin E."/>
            <person name="Tice H."/>
            <person name="Pitluck S."/>
            <person name="Sims D.R."/>
            <person name="Brettin T."/>
            <person name="Bruce D."/>
            <person name="Han C."/>
            <person name="Tapia R."/>
            <person name="Brainard J."/>
            <person name="Schmutz J."/>
            <person name="Larimer F."/>
            <person name="Land M."/>
            <person name="Hauser L."/>
            <person name="Kyrpides N."/>
            <person name="Mikhailova N."/>
            <person name="Brettar I."/>
            <person name="Klappenbach J."/>
            <person name="Konstantinidis K."/>
            <person name="Rodrigues J."/>
            <person name="Tiedje J."/>
            <person name="Richardson P."/>
        </authorList>
    </citation>
    <scope>NUCLEOTIDE SEQUENCE [LARGE SCALE GENOMIC DNA]</scope>
    <source>
        <strain>OS155 / ATCC BAA-1091</strain>
    </source>
</reference>
<comment type="similarity">
    <text evidence="1">Belongs to the bacterial ribosomal protein bL34 family.</text>
</comment>
<accession>A3DAT1</accession>
<name>RL34_SHEB5</name>